<comment type="function">
    <text evidence="1">Catalyzes the interconversion between ADP-D-glycero-beta-D-manno-heptose and ADP-L-glycero-beta-D-manno-heptose via an epimerization at carbon 6 of the heptose.</text>
</comment>
<comment type="catalytic activity">
    <reaction evidence="1">
        <text>ADP-D-glycero-beta-D-manno-heptose = ADP-L-glycero-beta-D-manno-heptose</text>
        <dbReference type="Rhea" id="RHEA:17577"/>
        <dbReference type="ChEBI" id="CHEBI:59967"/>
        <dbReference type="ChEBI" id="CHEBI:61506"/>
        <dbReference type="EC" id="5.1.3.20"/>
    </reaction>
</comment>
<comment type="cofactor">
    <cofactor evidence="1">
        <name>NADP(+)</name>
        <dbReference type="ChEBI" id="CHEBI:58349"/>
    </cofactor>
    <text evidence="1">Binds 1 NADP(+) per subunit.</text>
</comment>
<comment type="pathway">
    <text evidence="1">Nucleotide-sugar biosynthesis; ADP-L-glycero-beta-D-manno-heptose biosynthesis; ADP-L-glycero-beta-D-manno-heptose from D-glycero-beta-D-manno-heptose 7-phosphate: step 4/4.</text>
</comment>
<comment type="subunit">
    <text evidence="1">Homopentamer.</text>
</comment>
<comment type="domain">
    <text evidence="1">Contains a large N-terminal NADP-binding domain, and a smaller C-terminal substrate-binding domain.</text>
</comment>
<comment type="similarity">
    <text evidence="1">Belongs to the NAD(P)-dependent epimerase/dehydratase family. HldD subfamily.</text>
</comment>
<dbReference type="EC" id="5.1.3.20" evidence="1"/>
<dbReference type="EMBL" id="CP000308">
    <property type="protein sequence ID" value="ABG15446.1"/>
    <property type="molecule type" value="Genomic_DNA"/>
</dbReference>
<dbReference type="SMR" id="Q1C276"/>
<dbReference type="KEGG" id="ypa:YPA_3484"/>
<dbReference type="UniPathway" id="UPA00356">
    <property type="reaction ID" value="UER00440"/>
</dbReference>
<dbReference type="Proteomes" id="UP000001971">
    <property type="component" value="Chromosome"/>
</dbReference>
<dbReference type="GO" id="GO:0008712">
    <property type="term" value="F:ADP-glyceromanno-heptose 6-epimerase activity"/>
    <property type="evidence" value="ECO:0007669"/>
    <property type="project" value="UniProtKB-UniRule"/>
</dbReference>
<dbReference type="GO" id="GO:0050661">
    <property type="term" value="F:NADP binding"/>
    <property type="evidence" value="ECO:0007669"/>
    <property type="project" value="InterPro"/>
</dbReference>
<dbReference type="GO" id="GO:0097171">
    <property type="term" value="P:ADP-L-glycero-beta-D-manno-heptose biosynthetic process"/>
    <property type="evidence" value="ECO:0007669"/>
    <property type="project" value="UniProtKB-UniPathway"/>
</dbReference>
<dbReference type="GO" id="GO:0005975">
    <property type="term" value="P:carbohydrate metabolic process"/>
    <property type="evidence" value="ECO:0007669"/>
    <property type="project" value="UniProtKB-UniRule"/>
</dbReference>
<dbReference type="CDD" id="cd05248">
    <property type="entry name" value="ADP_GME_SDR_e"/>
    <property type="match status" value="1"/>
</dbReference>
<dbReference type="Gene3D" id="3.40.50.720">
    <property type="entry name" value="NAD(P)-binding Rossmann-like Domain"/>
    <property type="match status" value="1"/>
</dbReference>
<dbReference type="Gene3D" id="3.90.25.10">
    <property type="entry name" value="UDP-galactose 4-epimerase, domain 1"/>
    <property type="match status" value="1"/>
</dbReference>
<dbReference type="HAMAP" id="MF_01601">
    <property type="entry name" value="Heptose_epimerase"/>
    <property type="match status" value="1"/>
</dbReference>
<dbReference type="InterPro" id="IPR001509">
    <property type="entry name" value="Epimerase_deHydtase"/>
</dbReference>
<dbReference type="InterPro" id="IPR011912">
    <property type="entry name" value="Heptose_epim"/>
</dbReference>
<dbReference type="InterPro" id="IPR036291">
    <property type="entry name" value="NAD(P)-bd_dom_sf"/>
</dbReference>
<dbReference type="NCBIfam" id="TIGR02197">
    <property type="entry name" value="heptose_epim"/>
    <property type="match status" value="1"/>
</dbReference>
<dbReference type="NCBIfam" id="NF008360">
    <property type="entry name" value="PRK11150.1"/>
    <property type="match status" value="1"/>
</dbReference>
<dbReference type="PANTHER" id="PTHR43103:SF3">
    <property type="entry name" value="ADP-L-GLYCERO-D-MANNO-HEPTOSE-6-EPIMERASE"/>
    <property type="match status" value="1"/>
</dbReference>
<dbReference type="PANTHER" id="PTHR43103">
    <property type="entry name" value="NUCLEOSIDE-DIPHOSPHATE-SUGAR EPIMERASE"/>
    <property type="match status" value="1"/>
</dbReference>
<dbReference type="Pfam" id="PF01370">
    <property type="entry name" value="Epimerase"/>
    <property type="match status" value="1"/>
</dbReference>
<dbReference type="SUPFAM" id="SSF51735">
    <property type="entry name" value="NAD(P)-binding Rossmann-fold domains"/>
    <property type="match status" value="1"/>
</dbReference>
<keyword id="KW-0119">Carbohydrate metabolism</keyword>
<keyword id="KW-0413">Isomerase</keyword>
<keyword id="KW-0521">NADP</keyword>
<evidence type="ECO:0000255" key="1">
    <source>
        <dbReference type="HAMAP-Rule" id="MF_01601"/>
    </source>
</evidence>
<feature type="chain" id="PRO_0000255748" description="ADP-L-glycero-D-manno-heptose-6-epimerase">
    <location>
        <begin position="1"/>
        <end position="310"/>
    </location>
</feature>
<feature type="active site" description="Proton acceptor" evidence="1">
    <location>
        <position position="140"/>
    </location>
</feature>
<feature type="active site" description="Proton acceptor" evidence="1">
    <location>
        <position position="178"/>
    </location>
</feature>
<feature type="binding site" evidence="1">
    <location>
        <begin position="10"/>
        <end position="11"/>
    </location>
    <ligand>
        <name>NADP(+)</name>
        <dbReference type="ChEBI" id="CHEBI:58349"/>
    </ligand>
</feature>
<feature type="binding site" evidence="1">
    <location>
        <begin position="31"/>
        <end position="32"/>
    </location>
    <ligand>
        <name>NADP(+)</name>
        <dbReference type="ChEBI" id="CHEBI:58349"/>
    </ligand>
</feature>
<feature type="binding site" evidence="1">
    <location>
        <position position="38"/>
    </location>
    <ligand>
        <name>NADP(+)</name>
        <dbReference type="ChEBI" id="CHEBI:58349"/>
    </ligand>
</feature>
<feature type="binding site" evidence="1">
    <location>
        <position position="53"/>
    </location>
    <ligand>
        <name>NADP(+)</name>
        <dbReference type="ChEBI" id="CHEBI:58349"/>
    </ligand>
</feature>
<feature type="binding site" evidence="1">
    <location>
        <begin position="75"/>
        <end position="79"/>
    </location>
    <ligand>
        <name>NADP(+)</name>
        <dbReference type="ChEBI" id="CHEBI:58349"/>
    </ligand>
</feature>
<feature type="binding site" evidence="1">
    <location>
        <position position="92"/>
    </location>
    <ligand>
        <name>NADP(+)</name>
        <dbReference type="ChEBI" id="CHEBI:58349"/>
    </ligand>
</feature>
<feature type="binding site" evidence="1">
    <location>
        <position position="144"/>
    </location>
    <ligand>
        <name>NADP(+)</name>
        <dbReference type="ChEBI" id="CHEBI:58349"/>
    </ligand>
</feature>
<feature type="binding site" evidence="1">
    <location>
        <position position="169"/>
    </location>
    <ligand>
        <name>substrate</name>
    </ligand>
</feature>
<feature type="binding site" evidence="1">
    <location>
        <position position="170"/>
    </location>
    <ligand>
        <name>NADP(+)</name>
        <dbReference type="ChEBI" id="CHEBI:58349"/>
    </ligand>
</feature>
<feature type="binding site" evidence="1">
    <location>
        <position position="178"/>
    </location>
    <ligand>
        <name>NADP(+)</name>
        <dbReference type="ChEBI" id="CHEBI:58349"/>
    </ligand>
</feature>
<feature type="binding site" evidence="1">
    <location>
        <position position="180"/>
    </location>
    <ligand>
        <name>substrate</name>
    </ligand>
</feature>
<feature type="binding site" evidence="1">
    <location>
        <position position="187"/>
    </location>
    <ligand>
        <name>substrate</name>
    </ligand>
</feature>
<feature type="binding site" evidence="1">
    <location>
        <begin position="201"/>
        <end position="204"/>
    </location>
    <ligand>
        <name>substrate</name>
    </ligand>
</feature>
<feature type="binding site" evidence="1">
    <location>
        <position position="209"/>
    </location>
    <ligand>
        <name>substrate</name>
    </ligand>
</feature>
<feature type="binding site" evidence="1">
    <location>
        <position position="272"/>
    </location>
    <ligand>
        <name>substrate</name>
    </ligand>
</feature>
<reference key="1">
    <citation type="journal article" date="2006" name="J. Bacteriol.">
        <title>Complete genome sequence of Yersinia pestis strains Antiqua and Nepal516: evidence of gene reduction in an emerging pathogen.</title>
        <authorList>
            <person name="Chain P.S.G."/>
            <person name="Hu P."/>
            <person name="Malfatti S.A."/>
            <person name="Radnedge L."/>
            <person name="Larimer F."/>
            <person name="Vergez L.M."/>
            <person name="Worsham P."/>
            <person name="Chu M.C."/>
            <person name="Andersen G.L."/>
        </authorList>
    </citation>
    <scope>NUCLEOTIDE SEQUENCE [LARGE SCALE GENOMIC DNA]</scope>
    <source>
        <strain>Antiqua</strain>
    </source>
</reference>
<accession>Q1C276</accession>
<sequence length="310" mass="34780">MIIVTGGAGFIGSNIVKALNNIGYKDILVVDNLKDGTKFVNLVDLDIADYMDKEDFVASIVAGDDMGDIDAIFHEGACSSTTEWDGKYMMDNNYQYSKDILHFCLDRSIPFLYASSAATYGGRTDNFIEDRQYEQPLNVYGYSKFLFDQYVREILPQADSQICGFRYFNVYGPREGHKGSMASVAFHLNNQINAGERPKLFAGSENFKRDFIYVGDVADVNLWFWQNGVSGIFNCGTGRAESFQAVADAVVDYHQSGPVEYIEFPEKLKGRYQAYTQADLTKLRAAGYGKPFKTVAEGVKEYLAWLNRSV</sequence>
<proteinExistence type="inferred from homology"/>
<protein>
    <recommendedName>
        <fullName evidence="1">ADP-L-glycero-D-manno-heptose-6-epimerase</fullName>
        <ecNumber evidence="1">5.1.3.20</ecNumber>
    </recommendedName>
    <alternativeName>
        <fullName evidence="1">ADP-L-glycero-beta-D-manno-heptose-6-epimerase</fullName>
        <shortName evidence="1">ADP-glyceromanno-heptose 6-epimerase</shortName>
        <shortName evidence="1">ADP-hep 6-epimerase</shortName>
        <shortName evidence="1">AGME</shortName>
    </alternativeName>
</protein>
<organism>
    <name type="scientific">Yersinia pestis bv. Antiqua (strain Antiqua)</name>
    <dbReference type="NCBI Taxonomy" id="360102"/>
    <lineage>
        <taxon>Bacteria</taxon>
        <taxon>Pseudomonadati</taxon>
        <taxon>Pseudomonadota</taxon>
        <taxon>Gammaproteobacteria</taxon>
        <taxon>Enterobacterales</taxon>
        <taxon>Yersiniaceae</taxon>
        <taxon>Yersinia</taxon>
    </lineage>
</organism>
<name>HLDD_YERPA</name>
<gene>
    <name evidence="1" type="primary">hldD</name>
    <name type="ordered locus">YPA_3484</name>
</gene>